<protein>
    <recommendedName>
        <fullName evidence="1">UDP-N-acetylenolpyruvoylglucosamine reductase</fullName>
        <ecNumber evidence="1">1.3.1.98</ecNumber>
    </recommendedName>
    <alternativeName>
        <fullName evidence="1">UDP-N-acetylmuramate dehydrogenase</fullName>
    </alternativeName>
</protein>
<proteinExistence type="inferred from homology"/>
<sequence>MNQNKNYRVLFSNLYKDTQIQENAKMSEHINFRVGGPVDILLTPNTKEQIVETIKICKENKIPFYVLGNGSNVLVKDSGIRGVVIKLSEFDNIVRTGNTIKAESGALLKDVSAEALKASLTGFEFACGIPGSVGGAVFMNAGAYDGEISFVIKEAEVMSEDGKIITLSKDQLELGYRTSAIMKKNYIVITATFCFESGEKDKIEGRVSELTNKREEKQPLEFPSAGSTFKRPEGHFAGKLIQDAGLKDFTLGGAAVSGKHCGFIINKSNATAKDILDLIEYVQKEVKKQFGVDLYPEVRIIGED</sequence>
<reference key="1">
    <citation type="submission" date="2008-05" db="EMBL/GenBank/DDBJ databases">
        <title>Complete genome sequence of Clostridium botulinum E3 str. Alaska E43.</title>
        <authorList>
            <person name="Brinkac L.M."/>
            <person name="Brown J.L."/>
            <person name="Bruce D."/>
            <person name="Detter C."/>
            <person name="Munk C."/>
            <person name="Smith L.A."/>
            <person name="Smith T.J."/>
            <person name="Sutton G."/>
            <person name="Brettin T.S."/>
        </authorList>
    </citation>
    <scope>NUCLEOTIDE SEQUENCE [LARGE SCALE GENOMIC DNA]</scope>
    <source>
        <strain>Alaska E43 / Type E3</strain>
    </source>
</reference>
<comment type="function">
    <text evidence="1">Cell wall formation.</text>
</comment>
<comment type="catalytic activity">
    <reaction evidence="1">
        <text>UDP-N-acetyl-alpha-D-muramate + NADP(+) = UDP-N-acetyl-3-O-(1-carboxyvinyl)-alpha-D-glucosamine + NADPH + H(+)</text>
        <dbReference type="Rhea" id="RHEA:12248"/>
        <dbReference type="ChEBI" id="CHEBI:15378"/>
        <dbReference type="ChEBI" id="CHEBI:57783"/>
        <dbReference type="ChEBI" id="CHEBI:58349"/>
        <dbReference type="ChEBI" id="CHEBI:68483"/>
        <dbReference type="ChEBI" id="CHEBI:70757"/>
        <dbReference type="EC" id="1.3.1.98"/>
    </reaction>
</comment>
<comment type="cofactor">
    <cofactor evidence="1">
        <name>FAD</name>
        <dbReference type="ChEBI" id="CHEBI:57692"/>
    </cofactor>
</comment>
<comment type="pathway">
    <text evidence="1">Cell wall biogenesis; peptidoglycan biosynthesis.</text>
</comment>
<comment type="subcellular location">
    <subcellularLocation>
        <location evidence="1">Cytoplasm</location>
    </subcellularLocation>
</comment>
<comment type="similarity">
    <text evidence="1">Belongs to the MurB family.</text>
</comment>
<evidence type="ECO:0000255" key="1">
    <source>
        <dbReference type="HAMAP-Rule" id="MF_00037"/>
    </source>
</evidence>
<keyword id="KW-0131">Cell cycle</keyword>
<keyword id="KW-0132">Cell division</keyword>
<keyword id="KW-0133">Cell shape</keyword>
<keyword id="KW-0961">Cell wall biogenesis/degradation</keyword>
<keyword id="KW-0963">Cytoplasm</keyword>
<keyword id="KW-0274">FAD</keyword>
<keyword id="KW-0285">Flavoprotein</keyword>
<keyword id="KW-0521">NADP</keyword>
<keyword id="KW-0560">Oxidoreductase</keyword>
<keyword id="KW-0573">Peptidoglycan synthesis</keyword>
<accession>B2UZY4</accession>
<name>MURB_CLOBA</name>
<feature type="chain" id="PRO_1000191413" description="UDP-N-acetylenolpyruvoylglucosamine reductase">
    <location>
        <begin position="1"/>
        <end position="304"/>
    </location>
</feature>
<feature type="domain" description="FAD-binding PCMH-type" evidence="1">
    <location>
        <begin position="33"/>
        <end position="198"/>
    </location>
</feature>
<feature type="active site" evidence="1">
    <location>
        <position position="177"/>
    </location>
</feature>
<feature type="active site" description="Proton donor" evidence="1">
    <location>
        <position position="227"/>
    </location>
</feature>
<feature type="active site" evidence="1">
    <location>
        <position position="297"/>
    </location>
</feature>
<gene>
    <name evidence="1" type="primary">murB</name>
    <name type="ordered locus">CLH_3093</name>
</gene>
<dbReference type="EC" id="1.3.1.98" evidence="1"/>
<dbReference type="EMBL" id="CP001078">
    <property type="protein sequence ID" value="ACD52491.1"/>
    <property type="molecule type" value="Genomic_DNA"/>
</dbReference>
<dbReference type="RefSeq" id="WP_012450625.1">
    <property type="nucleotide sequence ID" value="NC_010723.1"/>
</dbReference>
<dbReference type="SMR" id="B2UZY4"/>
<dbReference type="KEGG" id="cbt:CLH_3093"/>
<dbReference type="HOGENOM" id="CLU_035304_1_1_9"/>
<dbReference type="UniPathway" id="UPA00219"/>
<dbReference type="GO" id="GO:0005829">
    <property type="term" value="C:cytosol"/>
    <property type="evidence" value="ECO:0007669"/>
    <property type="project" value="TreeGrafter"/>
</dbReference>
<dbReference type="GO" id="GO:0071949">
    <property type="term" value="F:FAD binding"/>
    <property type="evidence" value="ECO:0007669"/>
    <property type="project" value="InterPro"/>
</dbReference>
<dbReference type="GO" id="GO:0008762">
    <property type="term" value="F:UDP-N-acetylmuramate dehydrogenase activity"/>
    <property type="evidence" value="ECO:0007669"/>
    <property type="project" value="UniProtKB-UniRule"/>
</dbReference>
<dbReference type="GO" id="GO:0051301">
    <property type="term" value="P:cell division"/>
    <property type="evidence" value="ECO:0007669"/>
    <property type="project" value="UniProtKB-KW"/>
</dbReference>
<dbReference type="GO" id="GO:0071555">
    <property type="term" value="P:cell wall organization"/>
    <property type="evidence" value="ECO:0007669"/>
    <property type="project" value="UniProtKB-KW"/>
</dbReference>
<dbReference type="GO" id="GO:0009252">
    <property type="term" value="P:peptidoglycan biosynthetic process"/>
    <property type="evidence" value="ECO:0007669"/>
    <property type="project" value="UniProtKB-UniRule"/>
</dbReference>
<dbReference type="GO" id="GO:0008360">
    <property type="term" value="P:regulation of cell shape"/>
    <property type="evidence" value="ECO:0007669"/>
    <property type="project" value="UniProtKB-KW"/>
</dbReference>
<dbReference type="Gene3D" id="3.30.465.10">
    <property type="match status" value="1"/>
</dbReference>
<dbReference type="Gene3D" id="3.90.78.10">
    <property type="entry name" value="UDP-N-acetylenolpyruvoylglucosamine reductase, C-terminal domain"/>
    <property type="match status" value="1"/>
</dbReference>
<dbReference type="Gene3D" id="3.30.43.10">
    <property type="entry name" value="Uridine Diphospho-n-acetylenolpyruvylglucosamine Reductase, domain 2"/>
    <property type="match status" value="1"/>
</dbReference>
<dbReference type="HAMAP" id="MF_00037">
    <property type="entry name" value="MurB"/>
    <property type="match status" value="1"/>
</dbReference>
<dbReference type="InterPro" id="IPR016166">
    <property type="entry name" value="FAD-bd_PCMH"/>
</dbReference>
<dbReference type="InterPro" id="IPR036318">
    <property type="entry name" value="FAD-bd_PCMH-like_sf"/>
</dbReference>
<dbReference type="InterPro" id="IPR016167">
    <property type="entry name" value="FAD-bd_PCMH_sub1"/>
</dbReference>
<dbReference type="InterPro" id="IPR016169">
    <property type="entry name" value="FAD-bd_PCMH_sub2"/>
</dbReference>
<dbReference type="InterPro" id="IPR003170">
    <property type="entry name" value="MurB"/>
</dbReference>
<dbReference type="InterPro" id="IPR011601">
    <property type="entry name" value="MurB_C"/>
</dbReference>
<dbReference type="InterPro" id="IPR036635">
    <property type="entry name" value="MurB_C_sf"/>
</dbReference>
<dbReference type="InterPro" id="IPR006094">
    <property type="entry name" value="Oxid_FAD_bind_N"/>
</dbReference>
<dbReference type="NCBIfam" id="TIGR00179">
    <property type="entry name" value="murB"/>
    <property type="match status" value="1"/>
</dbReference>
<dbReference type="NCBIfam" id="NF010480">
    <property type="entry name" value="PRK13905.1"/>
    <property type="match status" value="1"/>
</dbReference>
<dbReference type="PANTHER" id="PTHR21071">
    <property type="entry name" value="UDP-N-ACETYLENOLPYRUVOYLGLUCOSAMINE REDUCTASE"/>
    <property type="match status" value="1"/>
</dbReference>
<dbReference type="PANTHER" id="PTHR21071:SF4">
    <property type="entry name" value="UDP-N-ACETYLENOLPYRUVOYLGLUCOSAMINE REDUCTASE"/>
    <property type="match status" value="1"/>
</dbReference>
<dbReference type="Pfam" id="PF01565">
    <property type="entry name" value="FAD_binding_4"/>
    <property type="match status" value="1"/>
</dbReference>
<dbReference type="Pfam" id="PF02873">
    <property type="entry name" value="MurB_C"/>
    <property type="match status" value="1"/>
</dbReference>
<dbReference type="SUPFAM" id="SSF56176">
    <property type="entry name" value="FAD-binding/transporter-associated domain-like"/>
    <property type="match status" value="1"/>
</dbReference>
<dbReference type="SUPFAM" id="SSF56194">
    <property type="entry name" value="Uridine diphospho-N-Acetylenolpyruvylglucosamine reductase, MurB, C-terminal domain"/>
    <property type="match status" value="1"/>
</dbReference>
<dbReference type="PROSITE" id="PS51387">
    <property type="entry name" value="FAD_PCMH"/>
    <property type="match status" value="1"/>
</dbReference>
<organism>
    <name type="scientific">Clostridium botulinum (strain Alaska E43 / Type E3)</name>
    <dbReference type="NCBI Taxonomy" id="508767"/>
    <lineage>
        <taxon>Bacteria</taxon>
        <taxon>Bacillati</taxon>
        <taxon>Bacillota</taxon>
        <taxon>Clostridia</taxon>
        <taxon>Eubacteriales</taxon>
        <taxon>Clostridiaceae</taxon>
        <taxon>Clostridium</taxon>
    </lineage>
</organism>